<accession>O34682</accession>
<accession>C0SPA6</accession>
<accession>Q797T7</accession>
<feature type="chain" id="PRO_0000388334" description="Uncharacterized protein YlbB">
    <location>
        <begin position="1"/>
        <end position="148"/>
    </location>
</feature>
<feature type="domain" description="CBS 1" evidence="1">
    <location>
        <begin position="8"/>
        <end position="68"/>
    </location>
</feature>
<feature type="domain" description="CBS 2" evidence="1">
    <location>
        <begin position="74"/>
        <end position="130"/>
    </location>
</feature>
<feature type="region of interest" description="Disordered" evidence="2">
    <location>
        <begin position="127"/>
        <end position="148"/>
    </location>
</feature>
<feature type="compositionally biased region" description="Basic and acidic residues" evidence="2">
    <location>
        <begin position="139"/>
        <end position="148"/>
    </location>
</feature>
<feature type="sequence conflict" description="In Ref. 1; CAB11348." evidence="3" ref="1">
    <original>DNREEGFFH</original>
    <variation>IIEKKAFFI</variation>
    <location>
        <begin position="140"/>
        <end position="148"/>
    </location>
</feature>
<dbReference type="EMBL" id="Z98682">
    <property type="protein sequence ID" value="CAB11348.1"/>
    <property type="molecule type" value="Genomic_DNA"/>
</dbReference>
<dbReference type="EMBL" id="AL009126">
    <property type="protein sequence ID" value="CAB13368.2"/>
    <property type="molecule type" value="Genomic_DNA"/>
</dbReference>
<dbReference type="PIR" id="G69873">
    <property type="entry name" value="G69873"/>
</dbReference>
<dbReference type="RefSeq" id="NP_389378.2">
    <property type="nucleotide sequence ID" value="NC_000964.3"/>
</dbReference>
<dbReference type="RefSeq" id="WP_003221362.1">
    <property type="nucleotide sequence ID" value="NZ_OZ025638.1"/>
</dbReference>
<dbReference type="SMR" id="O34682"/>
<dbReference type="FunCoup" id="O34682">
    <property type="interactions" value="263"/>
</dbReference>
<dbReference type="STRING" id="224308.BSU14950"/>
<dbReference type="jPOST" id="O34682"/>
<dbReference type="PaxDb" id="224308-BSU14950"/>
<dbReference type="EnsemblBacteria" id="CAB13368">
    <property type="protein sequence ID" value="CAB13368"/>
    <property type="gene ID" value="BSU_14950"/>
</dbReference>
<dbReference type="GeneID" id="938107"/>
<dbReference type="KEGG" id="bsu:BSU14950"/>
<dbReference type="PATRIC" id="fig|224308.179.peg.1630"/>
<dbReference type="eggNOG" id="COG2905">
    <property type="taxonomic scope" value="Bacteria"/>
</dbReference>
<dbReference type="InParanoid" id="O34682"/>
<dbReference type="OrthoDB" id="9802114at2"/>
<dbReference type="PhylomeDB" id="O34682"/>
<dbReference type="BioCyc" id="BSUB:BSU14950-MONOMER"/>
<dbReference type="Proteomes" id="UP000001570">
    <property type="component" value="Chromosome"/>
</dbReference>
<dbReference type="CDD" id="cd04622">
    <property type="entry name" value="CBS_pair_HRP1_like"/>
    <property type="match status" value="1"/>
</dbReference>
<dbReference type="Gene3D" id="3.10.580.10">
    <property type="entry name" value="CBS-domain"/>
    <property type="match status" value="1"/>
</dbReference>
<dbReference type="InterPro" id="IPR000644">
    <property type="entry name" value="CBS_dom"/>
</dbReference>
<dbReference type="InterPro" id="IPR046342">
    <property type="entry name" value="CBS_dom_sf"/>
</dbReference>
<dbReference type="InterPro" id="IPR051257">
    <property type="entry name" value="Diverse_CBS-Domain"/>
</dbReference>
<dbReference type="PANTHER" id="PTHR43080:SF2">
    <property type="entry name" value="CBS DOMAIN-CONTAINING PROTEIN"/>
    <property type="match status" value="1"/>
</dbReference>
<dbReference type="PANTHER" id="PTHR43080">
    <property type="entry name" value="CBS DOMAIN-CONTAINING PROTEIN CBSX3, MITOCHONDRIAL"/>
    <property type="match status" value="1"/>
</dbReference>
<dbReference type="Pfam" id="PF00571">
    <property type="entry name" value="CBS"/>
    <property type="match status" value="2"/>
</dbReference>
<dbReference type="SMART" id="SM00116">
    <property type="entry name" value="CBS"/>
    <property type="match status" value="2"/>
</dbReference>
<dbReference type="SUPFAM" id="SSF54631">
    <property type="entry name" value="CBS-domain pair"/>
    <property type="match status" value="1"/>
</dbReference>
<dbReference type="PROSITE" id="PS51371">
    <property type="entry name" value="CBS"/>
    <property type="match status" value="2"/>
</dbReference>
<gene>
    <name type="primary">ylbB</name>
    <name type="ordered locus">BSU14950</name>
</gene>
<organism>
    <name type="scientific">Bacillus subtilis (strain 168)</name>
    <dbReference type="NCBI Taxonomy" id="224308"/>
    <lineage>
        <taxon>Bacteria</taxon>
        <taxon>Bacillati</taxon>
        <taxon>Bacillota</taxon>
        <taxon>Bacilli</taxon>
        <taxon>Bacillales</taxon>
        <taxon>Bacillaceae</taxon>
        <taxon>Bacillus</taxon>
    </lineage>
</organism>
<sequence>MTKIKDLMTADLQYCTVLDNVYEAAVKMKDANVGAIPVVDEDGETLVGIVTDRDLVLRGIAIKKPNSQKITDAMTEKPVSVEEDASVDEVLHLMASHQLRRIPVTKNKKLTGIVTLGDLSLSEQTNERAGSALSDISEGDNREEGFFH</sequence>
<proteinExistence type="predicted"/>
<protein>
    <recommendedName>
        <fullName>Uncharacterized protein YlbB</fullName>
    </recommendedName>
</protein>
<reference key="1">
    <citation type="submission" date="1997-08" db="EMBL/GenBank/DDBJ databases">
        <title>Bacillus subtilis chromosomal region downstream nprE.</title>
        <authorList>
            <person name="Bertero M."/>
            <person name="Presecan E."/>
            <person name="Glaser P."/>
            <person name="Richou A."/>
            <person name="Danchin A."/>
        </authorList>
    </citation>
    <scope>NUCLEOTIDE SEQUENCE [GENOMIC DNA]</scope>
    <source>
        <strain>168</strain>
    </source>
</reference>
<reference key="2">
    <citation type="journal article" date="1997" name="Nature">
        <title>The complete genome sequence of the Gram-positive bacterium Bacillus subtilis.</title>
        <authorList>
            <person name="Kunst F."/>
            <person name="Ogasawara N."/>
            <person name="Moszer I."/>
            <person name="Albertini A.M."/>
            <person name="Alloni G."/>
            <person name="Azevedo V."/>
            <person name="Bertero M.G."/>
            <person name="Bessieres P."/>
            <person name="Bolotin A."/>
            <person name="Borchert S."/>
            <person name="Borriss R."/>
            <person name="Boursier L."/>
            <person name="Brans A."/>
            <person name="Braun M."/>
            <person name="Brignell S.C."/>
            <person name="Bron S."/>
            <person name="Brouillet S."/>
            <person name="Bruschi C.V."/>
            <person name="Caldwell B."/>
            <person name="Capuano V."/>
            <person name="Carter N.M."/>
            <person name="Choi S.-K."/>
            <person name="Codani J.-J."/>
            <person name="Connerton I.F."/>
            <person name="Cummings N.J."/>
            <person name="Daniel R.A."/>
            <person name="Denizot F."/>
            <person name="Devine K.M."/>
            <person name="Duesterhoeft A."/>
            <person name="Ehrlich S.D."/>
            <person name="Emmerson P.T."/>
            <person name="Entian K.-D."/>
            <person name="Errington J."/>
            <person name="Fabret C."/>
            <person name="Ferrari E."/>
            <person name="Foulger D."/>
            <person name="Fritz C."/>
            <person name="Fujita M."/>
            <person name="Fujita Y."/>
            <person name="Fuma S."/>
            <person name="Galizzi A."/>
            <person name="Galleron N."/>
            <person name="Ghim S.-Y."/>
            <person name="Glaser P."/>
            <person name="Goffeau A."/>
            <person name="Golightly E.J."/>
            <person name="Grandi G."/>
            <person name="Guiseppi G."/>
            <person name="Guy B.J."/>
            <person name="Haga K."/>
            <person name="Haiech J."/>
            <person name="Harwood C.R."/>
            <person name="Henaut A."/>
            <person name="Hilbert H."/>
            <person name="Holsappel S."/>
            <person name="Hosono S."/>
            <person name="Hullo M.-F."/>
            <person name="Itaya M."/>
            <person name="Jones L.-M."/>
            <person name="Joris B."/>
            <person name="Karamata D."/>
            <person name="Kasahara Y."/>
            <person name="Klaerr-Blanchard M."/>
            <person name="Klein C."/>
            <person name="Kobayashi Y."/>
            <person name="Koetter P."/>
            <person name="Koningstein G."/>
            <person name="Krogh S."/>
            <person name="Kumano M."/>
            <person name="Kurita K."/>
            <person name="Lapidus A."/>
            <person name="Lardinois S."/>
            <person name="Lauber J."/>
            <person name="Lazarevic V."/>
            <person name="Lee S.-M."/>
            <person name="Levine A."/>
            <person name="Liu H."/>
            <person name="Masuda S."/>
            <person name="Mauel C."/>
            <person name="Medigue C."/>
            <person name="Medina N."/>
            <person name="Mellado R.P."/>
            <person name="Mizuno M."/>
            <person name="Moestl D."/>
            <person name="Nakai S."/>
            <person name="Noback M."/>
            <person name="Noone D."/>
            <person name="O'Reilly M."/>
            <person name="Ogawa K."/>
            <person name="Ogiwara A."/>
            <person name="Oudega B."/>
            <person name="Park S.-H."/>
            <person name="Parro V."/>
            <person name="Pohl T.M."/>
            <person name="Portetelle D."/>
            <person name="Porwollik S."/>
            <person name="Prescott A.M."/>
            <person name="Presecan E."/>
            <person name="Pujic P."/>
            <person name="Purnelle B."/>
            <person name="Rapoport G."/>
            <person name="Rey M."/>
            <person name="Reynolds S."/>
            <person name="Rieger M."/>
            <person name="Rivolta C."/>
            <person name="Rocha E."/>
            <person name="Roche B."/>
            <person name="Rose M."/>
            <person name="Sadaie Y."/>
            <person name="Sato T."/>
            <person name="Scanlan E."/>
            <person name="Schleich S."/>
            <person name="Schroeter R."/>
            <person name="Scoffone F."/>
            <person name="Sekiguchi J."/>
            <person name="Sekowska A."/>
            <person name="Seror S.J."/>
            <person name="Serror P."/>
            <person name="Shin B.-S."/>
            <person name="Soldo B."/>
            <person name="Sorokin A."/>
            <person name="Tacconi E."/>
            <person name="Takagi T."/>
            <person name="Takahashi H."/>
            <person name="Takemaru K."/>
            <person name="Takeuchi M."/>
            <person name="Tamakoshi A."/>
            <person name="Tanaka T."/>
            <person name="Terpstra P."/>
            <person name="Tognoni A."/>
            <person name="Tosato V."/>
            <person name="Uchiyama S."/>
            <person name="Vandenbol M."/>
            <person name="Vannier F."/>
            <person name="Vassarotti A."/>
            <person name="Viari A."/>
            <person name="Wambutt R."/>
            <person name="Wedler E."/>
            <person name="Wedler H."/>
            <person name="Weitzenegger T."/>
            <person name="Winters P."/>
            <person name="Wipat A."/>
            <person name="Yamamoto H."/>
            <person name="Yamane K."/>
            <person name="Yasumoto K."/>
            <person name="Yata K."/>
            <person name="Yoshida K."/>
            <person name="Yoshikawa H.-F."/>
            <person name="Zumstein E."/>
            <person name="Yoshikawa H."/>
            <person name="Danchin A."/>
        </authorList>
    </citation>
    <scope>NUCLEOTIDE SEQUENCE [LARGE SCALE GENOMIC DNA]</scope>
    <source>
        <strain>168</strain>
    </source>
</reference>
<reference key="3">
    <citation type="journal article" date="2009" name="Microbiology">
        <title>From a consortium sequence to a unified sequence: the Bacillus subtilis 168 reference genome a decade later.</title>
        <authorList>
            <person name="Barbe V."/>
            <person name="Cruveiller S."/>
            <person name="Kunst F."/>
            <person name="Lenoble P."/>
            <person name="Meurice G."/>
            <person name="Sekowska A."/>
            <person name="Vallenet D."/>
            <person name="Wang T."/>
            <person name="Moszer I."/>
            <person name="Medigue C."/>
            <person name="Danchin A."/>
        </authorList>
    </citation>
    <scope>SEQUENCE REVISION TO C-TERMINUS</scope>
</reference>
<name>YLBB_BACSU</name>
<evidence type="ECO:0000255" key="1">
    <source>
        <dbReference type="PROSITE-ProRule" id="PRU00703"/>
    </source>
</evidence>
<evidence type="ECO:0000256" key="2">
    <source>
        <dbReference type="SAM" id="MobiDB-lite"/>
    </source>
</evidence>
<evidence type="ECO:0000305" key="3"/>
<keyword id="KW-0129">CBS domain</keyword>
<keyword id="KW-1185">Reference proteome</keyword>
<keyword id="KW-0677">Repeat</keyword>